<feature type="chain" id="PRO_0000106245" description="Valine--tRNA ligase">
    <location>
        <begin position="1"/>
        <end position="994"/>
    </location>
</feature>
<feature type="region of interest" description="Disordered" evidence="2">
    <location>
        <begin position="332"/>
        <end position="356"/>
    </location>
</feature>
<feature type="region of interest" description="Disordered" evidence="2">
    <location>
        <begin position="691"/>
        <end position="713"/>
    </location>
</feature>
<feature type="coiled-coil region" evidence="1">
    <location>
        <begin position="928"/>
        <end position="994"/>
    </location>
</feature>
<feature type="short sequence motif" description="'HIGH' region">
    <location>
        <begin position="43"/>
        <end position="53"/>
    </location>
</feature>
<feature type="short sequence motif" description="'KMSKS' region">
    <location>
        <begin position="585"/>
        <end position="589"/>
    </location>
</feature>
<feature type="compositionally biased region" description="Low complexity" evidence="2">
    <location>
        <begin position="333"/>
        <end position="353"/>
    </location>
</feature>
<feature type="binding site" evidence="1">
    <location>
        <position position="588"/>
    </location>
    <ligand>
        <name>ATP</name>
        <dbReference type="ChEBI" id="CHEBI:30616"/>
    </ligand>
</feature>
<protein>
    <recommendedName>
        <fullName evidence="1">Valine--tRNA ligase</fullName>
        <ecNumber evidence="1">6.1.1.9</ecNumber>
    </recommendedName>
    <alternativeName>
        <fullName evidence="1">Valyl-tRNA synthetase</fullName>
        <shortName evidence="1">ValRS</shortName>
    </alternativeName>
</protein>
<sequence length="994" mass="111465">MSQFTSSYDPTSFEARLYAEWEAAGHFKPSGVGQPYTILLPPPNVTGTLHMGHAFQQTLMDALVRYHRMCGDDTLWQVGTDHAGIATEMVVSRNMALEGRGETRDSLGREGFINKVWEWKQQSGDTIERQMRRLGVSADWSRSTFTMDAQPSAAVTEAFVRWYEEGLIYRGQRLVNWDPVLKTAISDLEVENVQEEGMLWSIRYPLSDGVTYEHIEHDAAGNETLRETRDSLIVATTRPETLLGDTAVMVHPEDRRYTALIGKTVTLPLTGRQIEVISDTYVEPTFGTGVVKVTPAHDFNDYQVGLRHRLPMIQVLDDAACIVSKTSIQSGIASGATSDTTDTPSDSDASNASNQHDTLIMPAHLAGLDRYEARKQILADLDAQGLLVAATPHTLQVPRGDRTGQVIEPYLTAQWFVRMETLAARGLELVERGAVRFVPPNWINTYRHWMENIQDWCISRQLWWGHRIPAWFDTQGCVYVGRSEAEVRAKHALGPEVTLTQDNDVLETWFSSQLWPFSTLGWPDPMAMAERGFERYLPSSVLVTGFDIIFFWVARMIMATDHFTGNVPFHDVYITGLIRDAQGQKMSKSKGNVLDPLDIIDGITLDDLVAKRTTGLMQPKLAEKIAKATRKEFPDGIAPHGADALRFTIAALATHGRDIKFDLGRAEGYKNFCNKLWNATRFVLMNTAGDTAHSPAQHQAGQDGQDVPRTPQPRTDAEQWILSRLAAVTAEAHAQFAAYRFDLLAQALYEFAWNEFCDWFVELAKPALNGDDTQAAASTRHTLLYVLETLLRLLHPLIPFITEELWCQVAPRLGIQATTLMLRPYPQPQQLETTAFANAAADVEWLKIMVSALRRIRSTLNVPPSRRISLLLQGGQEVDRRRITHFAIALHFLLKLEHIDWLSATTAAPPSATAIVGSLKLLVPLEGLIDVDAERARLDKEIKRVESEIDKSNGKLSNAVFVQNAPTAVVEQERSRLREWTTQLNGLRERRTTL</sequence>
<organism>
    <name type="scientific">Xylella fastidiosa (strain Temecula1 / ATCC 700964)</name>
    <dbReference type="NCBI Taxonomy" id="183190"/>
    <lineage>
        <taxon>Bacteria</taxon>
        <taxon>Pseudomonadati</taxon>
        <taxon>Pseudomonadota</taxon>
        <taxon>Gammaproteobacteria</taxon>
        <taxon>Lysobacterales</taxon>
        <taxon>Lysobacteraceae</taxon>
        <taxon>Xylella</taxon>
    </lineage>
</organism>
<reference key="1">
    <citation type="journal article" date="2003" name="J. Bacteriol.">
        <title>Comparative analyses of the complete genome sequences of Pierce's disease and citrus variegated chlorosis strains of Xylella fastidiosa.</title>
        <authorList>
            <person name="Van Sluys M.A."/>
            <person name="de Oliveira M.C."/>
            <person name="Monteiro-Vitorello C.B."/>
            <person name="Miyaki C.Y."/>
            <person name="Furlan L.R."/>
            <person name="Camargo L.E.A."/>
            <person name="da Silva A.C.R."/>
            <person name="Moon D.H."/>
            <person name="Takita M.A."/>
            <person name="Lemos E.G.M."/>
            <person name="Machado M.A."/>
            <person name="Ferro M.I.T."/>
            <person name="da Silva F.R."/>
            <person name="Goldman M.H.S."/>
            <person name="Goldman G.H."/>
            <person name="Lemos M.V.F."/>
            <person name="El-Dorry H."/>
            <person name="Tsai S.M."/>
            <person name="Carrer H."/>
            <person name="Carraro D.M."/>
            <person name="de Oliveira R.C."/>
            <person name="Nunes L.R."/>
            <person name="Siqueira W.J."/>
            <person name="Coutinho L.L."/>
            <person name="Kimura E.T."/>
            <person name="Ferro E.S."/>
            <person name="Harakava R."/>
            <person name="Kuramae E.E."/>
            <person name="Marino C.L."/>
            <person name="Giglioti E."/>
            <person name="Abreu I.L."/>
            <person name="Alves L.M.C."/>
            <person name="do Amaral A.M."/>
            <person name="Baia G.S."/>
            <person name="Blanco S.R."/>
            <person name="Brito M.S."/>
            <person name="Cannavan F.S."/>
            <person name="Celestino A.V."/>
            <person name="da Cunha A.F."/>
            <person name="Fenille R.C."/>
            <person name="Ferro J.A."/>
            <person name="Formighieri E.F."/>
            <person name="Kishi L.T."/>
            <person name="Leoni S.G."/>
            <person name="Oliveira A.R."/>
            <person name="Rosa V.E. Jr."/>
            <person name="Sassaki F.T."/>
            <person name="Sena J.A.D."/>
            <person name="de Souza A.A."/>
            <person name="Truffi D."/>
            <person name="Tsukumo F."/>
            <person name="Yanai G.M."/>
            <person name="Zaros L.G."/>
            <person name="Civerolo E.L."/>
            <person name="Simpson A.J.G."/>
            <person name="Almeida N.F. Jr."/>
            <person name="Setubal J.C."/>
            <person name="Kitajima J.P."/>
        </authorList>
    </citation>
    <scope>NUCLEOTIDE SEQUENCE [LARGE SCALE GENOMIC DNA]</scope>
    <source>
        <strain>Temecula1 / ATCC 700964</strain>
    </source>
</reference>
<name>SYV_XYLFT</name>
<evidence type="ECO:0000255" key="1">
    <source>
        <dbReference type="HAMAP-Rule" id="MF_02004"/>
    </source>
</evidence>
<evidence type="ECO:0000256" key="2">
    <source>
        <dbReference type="SAM" id="MobiDB-lite"/>
    </source>
</evidence>
<accession>Q87F36</accession>
<comment type="function">
    <text evidence="1">Catalyzes the attachment of valine to tRNA(Val). As ValRS can inadvertently accommodate and process structurally similar amino acids such as threonine, to avoid such errors, it has a 'posttransfer' editing activity that hydrolyzes mischarged Thr-tRNA(Val) in a tRNA-dependent manner.</text>
</comment>
<comment type="catalytic activity">
    <reaction evidence="1">
        <text>tRNA(Val) + L-valine + ATP = L-valyl-tRNA(Val) + AMP + diphosphate</text>
        <dbReference type="Rhea" id="RHEA:10704"/>
        <dbReference type="Rhea" id="RHEA-COMP:9672"/>
        <dbReference type="Rhea" id="RHEA-COMP:9708"/>
        <dbReference type="ChEBI" id="CHEBI:30616"/>
        <dbReference type="ChEBI" id="CHEBI:33019"/>
        <dbReference type="ChEBI" id="CHEBI:57762"/>
        <dbReference type="ChEBI" id="CHEBI:78442"/>
        <dbReference type="ChEBI" id="CHEBI:78537"/>
        <dbReference type="ChEBI" id="CHEBI:456215"/>
        <dbReference type="EC" id="6.1.1.9"/>
    </reaction>
</comment>
<comment type="subunit">
    <text evidence="1">Monomer.</text>
</comment>
<comment type="subcellular location">
    <subcellularLocation>
        <location evidence="1">Cytoplasm</location>
    </subcellularLocation>
</comment>
<comment type="domain">
    <text evidence="1">ValRS has two distinct active sites: one for aminoacylation and one for editing. The misactivated threonine is translocated from the active site to the editing site.</text>
</comment>
<comment type="domain">
    <text evidence="1">The C-terminal coiled-coil domain is crucial for aminoacylation activity.</text>
</comment>
<comment type="similarity">
    <text evidence="1">Belongs to the class-I aminoacyl-tRNA synthetase family. ValS type 1 subfamily.</text>
</comment>
<gene>
    <name evidence="1" type="primary">valS</name>
    <name type="ordered locus">PD_0102</name>
</gene>
<keyword id="KW-0030">Aminoacyl-tRNA synthetase</keyword>
<keyword id="KW-0067">ATP-binding</keyword>
<keyword id="KW-0175">Coiled coil</keyword>
<keyword id="KW-0963">Cytoplasm</keyword>
<keyword id="KW-0436">Ligase</keyword>
<keyword id="KW-0547">Nucleotide-binding</keyword>
<keyword id="KW-0648">Protein biosynthesis</keyword>
<keyword id="KW-1185">Reference proteome</keyword>
<dbReference type="EC" id="6.1.1.9" evidence="1"/>
<dbReference type="EMBL" id="AE009442">
    <property type="protein sequence ID" value="AAO28001.1"/>
    <property type="molecule type" value="Genomic_DNA"/>
</dbReference>
<dbReference type="RefSeq" id="WP_004087603.1">
    <property type="nucleotide sequence ID" value="NC_004556.1"/>
</dbReference>
<dbReference type="SMR" id="Q87F36"/>
<dbReference type="KEGG" id="xft:PD_0102"/>
<dbReference type="HOGENOM" id="CLU_001493_0_2_6"/>
<dbReference type="Proteomes" id="UP000002516">
    <property type="component" value="Chromosome"/>
</dbReference>
<dbReference type="GO" id="GO:0005829">
    <property type="term" value="C:cytosol"/>
    <property type="evidence" value="ECO:0007669"/>
    <property type="project" value="TreeGrafter"/>
</dbReference>
<dbReference type="GO" id="GO:0002161">
    <property type="term" value="F:aminoacyl-tRNA deacylase activity"/>
    <property type="evidence" value="ECO:0007669"/>
    <property type="project" value="InterPro"/>
</dbReference>
<dbReference type="GO" id="GO:0005524">
    <property type="term" value="F:ATP binding"/>
    <property type="evidence" value="ECO:0007669"/>
    <property type="project" value="UniProtKB-UniRule"/>
</dbReference>
<dbReference type="GO" id="GO:0004832">
    <property type="term" value="F:valine-tRNA ligase activity"/>
    <property type="evidence" value="ECO:0007669"/>
    <property type="project" value="UniProtKB-UniRule"/>
</dbReference>
<dbReference type="GO" id="GO:0006438">
    <property type="term" value="P:valyl-tRNA aminoacylation"/>
    <property type="evidence" value="ECO:0007669"/>
    <property type="project" value="UniProtKB-UniRule"/>
</dbReference>
<dbReference type="CDD" id="cd07962">
    <property type="entry name" value="Anticodon_Ia_Val"/>
    <property type="match status" value="1"/>
</dbReference>
<dbReference type="CDD" id="cd00817">
    <property type="entry name" value="ValRS_core"/>
    <property type="match status" value="1"/>
</dbReference>
<dbReference type="FunFam" id="1.10.287.380:FF:000001">
    <property type="entry name" value="Valine--tRNA ligase"/>
    <property type="match status" value="1"/>
</dbReference>
<dbReference type="FunFam" id="3.40.50.620:FF:000032">
    <property type="entry name" value="Valine--tRNA ligase"/>
    <property type="match status" value="1"/>
</dbReference>
<dbReference type="FunFam" id="3.40.50.620:FF:000098">
    <property type="entry name" value="Valine--tRNA ligase"/>
    <property type="match status" value="1"/>
</dbReference>
<dbReference type="Gene3D" id="3.40.50.620">
    <property type="entry name" value="HUPs"/>
    <property type="match status" value="2"/>
</dbReference>
<dbReference type="Gene3D" id="1.10.730.10">
    <property type="entry name" value="Isoleucyl-tRNA Synthetase, Domain 1"/>
    <property type="match status" value="1"/>
</dbReference>
<dbReference type="Gene3D" id="1.10.287.380">
    <property type="entry name" value="Valyl-tRNA synthetase, C-terminal domain"/>
    <property type="match status" value="1"/>
</dbReference>
<dbReference type="Gene3D" id="3.90.740.10">
    <property type="entry name" value="Valyl/Leucyl/Isoleucyl-tRNA synthetase, editing domain"/>
    <property type="match status" value="2"/>
</dbReference>
<dbReference type="HAMAP" id="MF_02004">
    <property type="entry name" value="Val_tRNA_synth_type1"/>
    <property type="match status" value="1"/>
</dbReference>
<dbReference type="InterPro" id="IPR001412">
    <property type="entry name" value="aa-tRNA-synth_I_CS"/>
</dbReference>
<dbReference type="InterPro" id="IPR002300">
    <property type="entry name" value="aa-tRNA-synth_Ia"/>
</dbReference>
<dbReference type="InterPro" id="IPR033705">
    <property type="entry name" value="Anticodon_Ia_Val"/>
</dbReference>
<dbReference type="InterPro" id="IPR013155">
    <property type="entry name" value="M/V/L/I-tRNA-synth_anticd-bd"/>
</dbReference>
<dbReference type="InterPro" id="IPR014729">
    <property type="entry name" value="Rossmann-like_a/b/a_fold"/>
</dbReference>
<dbReference type="InterPro" id="IPR010978">
    <property type="entry name" value="tRNA-bd_arm"/>
</dbReference>
<dbReference type="InterPro" id="IPR009080">
    <property type="entry name" value="tRNAsynth_Ia_anticodon-bd"/>
</dbReference>
<dbReference type="InterPro" id="IPR037118">
    <property type="entry name" value="Val-tRNA_synth_C_sf"/>
</dbReference>
<dbReference type="InterPro" id="IPR019499">
    <property type="entry name" value="Val-tRNA_synth_tRNA-bd"/>
</dbReference>
<dbReference type="InterPro" id="IPR009008">
    <property type="entry name" value="Val/Leu/Ile-tRNA-synth_edit"/>
</dbReference>
<dbReference type="InterPro" id="IPR002303">
    <property type="entry name" value="Valyl-tRNA_ligase"/>
</dbReference>
<dbReference type="NCBIfam" id="NF004349">
    <property type="entry name" value="PRK05729.1"/>
    <property type="match status" value="1"/>
</dbReference>
<dbReference type="NCBIfam" id="TIGR00422">
    <property type="entry name" value="valS"/>
    <property type="match status" value="1"/>
</dbReference>
<dbReference type="PANTHER" id="PTHR11946:SF93">
    <property type="entry name" value="VALINE--TRNA LIGASE, CHLOROPLASTIC_MITOCHONDRIAL 2"/>
    <property type="match status" value="1"/>
</dbReference>
<dbReference type="PANTHER" id="PTHR11946">
    <property type="entry name" value="VALYL-TRNA SYNTHETASES"/>
    <property type="match status" value="1"/>
</dbReference>
<dbReference type="Pfam" id="PF08264">
    <property type="entry name" value="Anticodon_1"/>
    <property type="match status" value="1"/>
</dbReference>
<dbReference type="Pfam" id="PF00133">
    <property type="entry name" value="tRNA-synt_1"/>
    <property type="match status" value="1"/>
</dbReference>
<dbReference type="Pfam" id="PF10458">
    <property type="entry name" value="Val_tRNA-synt_C"/>
    <property type="match status" value="1"/>
</dbReference>
<dbReference type="PRINTS" id="PR00986">
    <property type="entry name" value="TRNASYNTHVAL"/>
</dbReference>
<dbReference type="SUPFAM" id="SSF47323">
    <property type="entry name" value="Anticodon-binding domain of a subclass of class I aminoacyl-tRNA synthetases"/>
    <property type="match status" value="1"/>
</dbReference>
<dbReference type="SUPFAM" id="SSF52374">
    <property type="entry name" value="Nucleotidylyl transferase"/>
    <property type="match status" value="1"/>
</dbReference>
<dbReference type="SUPFAM" id="SSF46589">
    <property type="entry name" value="tRNA-binding arm"/>
    <property type="match status" value="1"/>
</dbReference>
<dbReference type="SUPFAM" id="SSF50677">
    <property type="entry name" value="ValRS/IleRS/LeuRS editing domain"/>
    <property type="match status" value="1"/>
</dbReference>
<dbReference type="PROSITE" id="PS00178">
    <property type="entry name" value="AA_TRNA_LIGASE_I"/>
    <property type="match status" value="1"/>
</dbReference>
<proteinExistence type="inferred from homology"/>